<protein>
    <recommendedName>
        <fullName evidence="1">Flap endonuclease 1-A</fullName>
        <shortName evidence="1">FEN-1-A</shortName>
        <ecNumber evidence="1">3.1.-.-</ecNumber>
    </recommendedName>
    <alternativeName>
        <fullName evidence="1">Flap structure-specific endonuclease 1-A</fullName>
    </alternativeName>
    <alternativeName>
        <fullName evidence="7">OsFEN-1</fullName>
    </alternativeName>
    <alternativeName>
        <fullName>OsFEN-1a</fullName>
    </alternativeName>
</protein>
<gene>
    <name evidence="8" type="primary">FEN1A</name>
    <name type="ordered locus">Os05g0540100</name>
    <name type="ordered locus">LOC_Os05g46270</name>
    <name type="ORF">OsJ_19381</name>
    <name type="ORF">OSJNBa0052K01.23</name>
</gene>
<reference key="1">
    <citation type="journal article" date="2000" name="Plant Mol. Biol.">
        <title>Plant homologue of flap endonuclease-1: molecular cloning, characterization, and evidence of expression in meristematic tissues.</title>
        <authorList>
            <person name="Kimura S."/>
            <person name="Ueda T."/>
            <person name="Hatanaka M."/>
            <person name="Takenouchi M."/>
            <person name="Hashimoto J."/>
            <person name="Sakaguchi K."/>
        </authorList>
    </citation>
    <scope>NUCLEOTIDE SEQUENCE [MRNA]</scope>
    <scope>FUNCTION</scope>
    <scope>TISSUE SPECIFICITY</scope>
    <scope>COFACTOR</scope>
    <scope>ACTIVITY REGULATION</scope>
    <source>
        <strain>cv. Nipponbare</strain>
        <tissue>Meristem</tissue>
    </source>
</reference>
<reference key="2">
    <citation type="journal article" date="2005" name="Mol. Genet. Genomics">
        <title>A fine physical map of the rice chromosome 5.</title>
        <authorList>
            <person name="Cheng C.-H."/>
            <person name="Chung M.C."/>
            <person name="Liu S.-M."/>
            <person name="Chen S.-K."/>
            <person name="Kao F.Y."/>
            <person name="Lin S.-J."/>
            <person name="Hsiao S.-H."/>
            <person name="Tseng I.C."/>
            <person name="Hsing Y.-I.C."/>
            <person name="Wu H.-P."/>
            <person name="Chen C.-S."/>
            <person name="Shaw J.-F."/>
            <person name="Wu J."/>
            <person name="Matsumoto T."/>
            <person name="Sasaki T."/>
            <person name="Chen H.-C."/>
            <person name="Chow T.-Y."/>
        </authorList>
    </citation>
    <scope>NUCLEOTIDE SEQUENCE [LARGE SCALE GENOMIC DNA]</scope>
    <source>
        <strain>cv. Nipponbare</strain>
    </source>
</reference>
<reference key="3">
    <citation type="journal article" date="2005" name="Nature">
        <title>The map-based sequence of the rice genome.</title>
        <authorList>
            <consortium name="International rice genome sequencing project (IRGSP)"/>
        </authorList>
    </citation>
    <scope>NUCLEOTIDE SEQUENCE [LARGE SCALE GENOMIC DNA]</scope>
    <source>
        <strain>cv. Nipponbare</strain>
    </source>
</reference>
<reference key="4">
    <citation type="journal article" date="2008" name="Nucleic Acids Res.">
        <title>The rice annotation project database (RAP-DB): 2008 update.</title>
        <authorList>
            <consortium name="The rice annotation project (RAP)"/>
        </authorList>
    </citation>
    <scope>GENOME REANNOTATION</scope>
    <source>
        <strain>cv. Nipponbare</strain>
    </source>
</reference>
<reference key="5">
    <citation type="journal article" date="2013" name="Rice">
        <title>Improvement of the Oryza sativa Nipponbare reference genome using next generation sequence and optical map data.</title>
        <authorList>
            <person name="Kawahara Y."/>
            <person name="de la Bastide M."/>
            <person name="Hamilton J.P."/>
            <person name="Kanamori H."/>
            <person name="McCombie W.R."/>
            <person name="Ouyang S."/>
            <person name="Schwartz D.C."/>
            <person name="Tanaka T."/>
            <person name="Wu J."/>
            <person name="Zhou S."/>
            <person name="Childs K.L."/>
            <person name="Davidson R.M."/>
            <person name="Lin H."/>
            <person name="Quesada-Ocampo L."/>
            <person name="Vaillancourt B."/>
            <person name="Sakai H."/>
            <person name="Lee S.S."/>
            <person name="Kim J."/>
            <person name="Numa H."/>
            <person name="Itoh T."/>
            <person name="Buell C.R."/>
            <person name="Matsumoto T."/>
        </authorList>
    </citation>
    <scope>GENOME REANNOTATION</scope>
    <source>
        <strain>cv. Nipponbare</strain>
    </source>
</reference>
<reference key="6">
    <citation type="journal article" date="2005" name="PLoS Biol.">
        <title>The genomes of Oryza sativa: a history of duplications.</title>
        <authorList>
            <person name="Yu J."/>
            <person name="Wang J."/>
            <person name="Lin W."/>
            <person name="Li S."/>
            <person name="Li H."/>
            <person name="Zhou J."/>
            <person name="Ni P."/>
            <person name="Dong W."/>
            <person name="Hu S."/>
            <person name="Zeng C."/>
            <person name="Zhang J."/>
            <person name="Zhang Y."/>
            <person name="Li R."/>
            <person name="Xu Z."/>
            <person name="Li S."/>
            <person name="Li X."/>
            <person name="Zheng H."/>
            <person name="Cong L."/>
            <person name="Lin L."/>
            <person name="Yin J."/>
            <person name="Geng J."/>
            <person name="Li G."/>
            <person name="Shi J."/>
            <person name="Liu J."/>
            <person name="Lv H."/>
            <person name="Li J."/>
            <person name="Wang J."/>
            <person name="Deng Y."/>
            <person name="Ran L."/>
            <person name="Shi X."/>
            <person name="Wang X."/>
            <person name="Wu Q."/>
            <person name="Li C."/>
            <person name="Ren X."/>
            <person name="Wang J."/>
            <person name="Wang X."/>
            <person name="Li D."/>
            <person name="Liu D."/>
            <person name="Zhang X."/>
            <person name="Ji Z."/>
            <person name="Zhao W."/>
            <person name="Sun Y."/>
            <person name="Zhang Z."/>
            <person name="Bao J."/>
            <person name="Han Y."/>
            <person name="Dong L."/>
            <person name="Ji J."/>
            <person name="Chen P."/>
            <person name="Wu S."/>
            <person name="Liu J."/>
            <person name="Xiao Y."/>
            <person name="Bu D."/>
            <person name="Tan J."/>
            <person name="Yang L."/>
            <person name="Ye C."/>
            <person name="Zhang J."/>
            <person name="Xu J."/>
            <person name="Zhou Y."/>
            <person name="Yu Y."/>
            <person name="Zhang B."/>
            <person name="Zhuang S."/>
            <person name="Wei H."/>
            <person name="Liu B."/>
            <person name="Lei M."/>
            <person name="Yu H."/>
            <person name="Li Y."/>
            <person name="Xu H."/>
            <person name="Wei S."/>
            <person name="He X."/>
            <person name="Fang L."/>
            <person name="Zhang Z."/>
            <person name="Zhang Y."/>
            <person name="Huang X."/>
            <person name="Su Z."/>
            <person name="Tong W."/>
            <person name="Li J."/>
            <person name="Tong Z."/>
            <person name="Li S."/>
            <person name="Ye J."/>
            <person name="Wang L."/>
            <person name="Fang L."/>
            <person name="Lei T."/>
            <person name="Chen C.-S."/>
            <person name="Chen H.-C."/>
            <person name="Xu Z."/>
            <person name="Li H."/>
            <person name="Huang H."/>
            <person name="Zhang F."/>
            <person name="Xu H."/>
            <person name="Li N."/>
            <person name="Zhao C."/>
            <person name="Li S."/>
            <person name="Dong L."/>
            <person name="Huang Y."/>
            <person name="Li L."/>
            <person name="Xi Y."/>
            <person name="Qi Q."/>
            <person name="Li W."/>
            <person name="Zhang B."/>
            <person name="Hu W."/>
            <person name="Zhang Y."/>
            <person name="Tian X."/>
            <person name="Jiao Y."/>
            <person name="Liang X."/>
            <person name="Jin J."/>
            <person name="Gao L."/>
            <person name="Zheng W."/>
            <person name="Hao B."/>
            <person name="Liu S.-M."/>
            <person name="Wang W."/>
            <person name="Yuan L."/>
            <person name="Cao M."/>
            <person name="McDermott J."/>
            <person name="Samudrala R."/>
            <person name="Wang J."/>
            <person name="Wong G.K.-S."/>
            <person name="Yang H."/>
        </authorList>
    </citation>
    <scope>NUCLEOTIDE SEQUENCE [LARGE SCALE GENOMIC DNA]</scope>
    <source>
        <strain>cv. Nipponbare</strain>
    </source>
</reference>
<reference key="7">
    <citation type="journal article" date="2001" name="Plant J.">
        <title>Characterization of plant proliferating cell nuclear antigen (PCNA) and flap endonuclease-1 (FEN-1), and their distribution in mitotic and meiotic cell cycles.</title>
        <authorList>
            <person name="Kimura S."/>
            <person name="Suzuki T."/>
            <person name="Yanagawa Y."/>
            <person name="Yamamoto T."/>
            <person name="Nakagawa H."/>
            <person name="Tanaka I."/>
            <person name="Hashimoto J."/>
            <person name="Sakaguchi K."/>
        </authorList>
    </citation>
    <scope>INTERACTION WITH PCNA</scope>
    <scope>SUBCELLULAR LOCATION</scope>
</reference>
<reference key="8">
    <citation type="journal article" date="2003" name="Gene">
        <title>Functional characterization of two flap endonuclease-1 homologues in rice.</title>
        <authorList>
            <person name="Kimura S."/>
            <person name="Furukawa T."/>
            <person name="Kasai N."/>
            <person name="Mori Y."/>
            <person name="Kitamoto H.K."/>
            <person name="Sugawara F."/>
            <person name="Hashimoto J."/>
            <person name="Sakaguchi K."/>
        </authorList>
    </citation>
    <scope>FUNCTION</scope>
    <scope>TISSUE SPECIFICITY</scope>
</reference>
<reference key="9">
    <citation type="journal article" date="2014" name="J. Hered.">
        <title>Unraveling low-level gamma radiation--responsive changes in expression of early and late genes in leaves of rice seedlings at Iitate Village, Fukushima.</title>
        <authorList>
            <person name="Hayashi G."/>
            <person name="Shibato J."/>
            <person name="Imanaka T."/>
            <person name="Cho K."/>
            <person name="Kubo A."/>
            <person name="Kikuchi S."/>
            <person name="Satoh K."/>
            <person name="Kimura S."/>
            <person name="Ozawa S."/>
            <person name="Fukutani S."/>
            <person name="Endo S."/>
            <person name="Ichikawa K."/>
            <person name="Agrawal G.K."/>
            <person name="Shioda S."/>
            <person name="Fukumoto M."/>
            <person name="Rakwal R."/>
        </authorList>
    </citation>
    <scope>INDUCTION BY GAMMA IRRADIATION</scope>
</reference>
<name>FEN11_ORYSJ</name>
<evidence type="ECO:0000255" key="1">
    <source>
        <dbReference type="HAMAP-Rule" id="MF_03140"/>
    </source>
</evidence>
<evidence type="ECO:0000256" key="2">
    <source>
        <dbReference type="SAM" id="MobiDB-lite"/>
    </source>
</evidence>
<evidence type="ECO:0000269" key="3">
    <source>
    </source>
</evidence>
<evidence type="ECO:0000269" key="4">
    <source>
    </source>
</evidence>
<evidence type="ECO:0000269" key="5">
    <source>
    </source>
</evidence>
<evidence type="ECO:0000269" key="6">
    <source>
    </source>
</evidence>
<evidence type="ECO:0000303" key="7">
    <source>
    </source>
</evidence>
<evidence type="ECO:0000305" key="8"/>
<comment type="function">
    <text evidence="1 3 5">Structure-specific nuclease with 5'-flap endonuclease and 5'-3' exonuclease activities involved in DNA replication and repair. During DNA replication, cleaves the 5'-overhanging flap structure that is generated by displacement synthesis when DNA polymerase encounters the 5'-end of a downstream Okazaki fragment. It enters the flap from the 5'-end and then tracks to cleave the flap base, leaving a nick for ligation. Also involved in the long patch base excision repair (LP-BER) pathway, by cleaving within the apurinic/apyrimidinic (AP) site-terminated flap. Acts as a genome stabilization factor that prevents flaps from equilibrating into structures that lead to duplications and deletions. Also possesses 5'-3' exonuclease activity on nicked or gapped double-stranded DNA, and exhibits RNase H activity. Also involved in replication and repair of rDNA and in repairing mitochondrial DNA (By similarity). May be required for cell proliferation.</text>
</comment>
<comment type="cofactor">
    <cofactor evidence="1">
        <name>Mg(2+)</name>
        <dbReference type="ChEBI" id="CHEBI:18420"/>
    </cofactor>
    <text evidence="1">Binds 2 magnesium ions per subunit. They probably participate in the reaction catalyzed by the enzyme. May bind an additional third magnesium ion after substrate binding.</text>
</comment>
<comment type="activity regulation">
    <text evidence="3">Inhibited by NaCl.</text>
</comment>
<comment type="subunit">
    <text evidence="1 4">Interacts with PCNA. Three molecules of FEN1 bind to one PCNA trimer with each molecule binding to one PCNA monomer. PCNA stimulates the nuclease activity without altering cleavage specificity.</text>
</comment>
<comment type="subcellular location">
    <subcellularLocation>
        <location evidence="1 4">Nucleus</location>
        <location evidence="1 4">Nucleolus</location>
    </subcellularLocation>
    <subcellularLocation>
        <location evidence="1">Nucleus</location>
        <location evidence="1">Nucleoplasm</location>
    </subcellularLocation>
    <subcellularLocation>
        <location evidence="1">Mitochondrion</location>
    </subcellularLocation>
    <text evidence="1">Resides mostly in the nucleoli and relocalizes to the nucleoplasm upon DNA damage.</text>
</comment>
<comment type="tissue specificity">
    <text evidence="3 5">Strongly expressed in proliferating tissues: root and shoot apical meristem, tiller bud, leaf, ligule primordia, marginal meristem of young leaves and panicles. Not expressed in mature leaves when exposed to UV.</text>
</comment>
<comment type="induction">
    <text evidence="6">Induced by gamma irradiation.</text>
</comment>
<comment type="PTM">
    <text evidence="1">Phosphorylated. Phosphorylation upon DNA damage induces relocalization to the nuclear plasma.</text>
</comment>
<comment type="similarity">
    <text evidence="1">Belongs to the XPG/RAD2 endonuclease family. FEN1 subfamily.</text>
</comment>
<comment type="sequence caution" evidence="8">
    <conflict type="erroneous gene model prediction">
        <sequence resource="EMBL-CDS" id="AAV59413"/>
    </conflict>
</comment>
<organism>
    <name type="scientific">Oryza sativa subsp. japonica</name>
    <name type="common">Rice</name>
    <dbReference type="NCBI Taxonomy" id="39947"/>
    <lineage>
        <taxon>Eukaryota</taxon>
        <taxon>Viridiplantae</taxon>
        <taxon>Streptophyta</taxon>
        <taxon>Embryophyta</taxon>
        <taxon>Tracheophyta</taxon>
        <taxon>Spermatophyta</taxon>
        <taxon>Magnoliopsida</taxon>
        <taxon>Liliopsida</taxon>
        <taxon>Poales</taxon>
        <taxon>Poaceae</taxon>
        <taxon>BOP clade</taxon>
        <taxon>Oryzoideae</taxon>
        <taxon>Oryzeae</taxon>
        <taxon>Oryzinae</taxon>
        <taxon>Oryza</taxon>
        <taxon>Oryza sativa</taxon>
    </lineage>
</organism>
<keyword id="KW-0227">DNA damage</keyword>
<keyword id="KW-0234">DNA repair</keyword>
<keyword id="KW-0235">DNA replication</keyword>
<keyword id="KW-0255">Endonuclease</keyword>
<keyword id="KW-0269">Exonuclease</keyword>
<keyword id="KW-0378">Hydrolase</keyword>
<keyword id="KW-0460">Magnesium</keyword>
<keyword id="KW-0479">Metal-binding</keyword>
<keyword id="KW-0496">Mitochondrion</keyword>
<keyword id="KW-0540">Nuclease</keyword>
<keyword id="KW-0539">Nucleus</keyword>
<keyword id="KW-0597">Phosphoprotein</keyword>
<keyword id="KW-1185">Reference proteome</keyword>
<proteinExistence type="evidence at protein level"/>
<feature type="chain" id="PRO_0000154071" description="Flap endonuclease 1-A">
    <location>
        <begin position="1"/>
        <end position="380"/>
    </location>
</feature>
<feature type="region of interest" description="N-domain">
    <location>
        <begin position="1"/>
        <end position="105"/>
    </location>
</feature>
<feature type="region of interest" description="I-domain">
    <location>
        <begin position="123"/>
        <end position="254"/>
    </location>
</feature>
<feature type="region of interest" description="Interaction with PCNA" evidence="1">
    <location>
        <begin position="336"/>
        <end position="344"/>
    </location>
</feature>
<feature type="region of interest" description="Disordered" evidence="2">
    <location>
        <begin position="351"/>
        <end position="380"/>
    </location>
</feature>
<feature type="compositionally biased region" description="Basic and acidic residues" evidence="2">
    <location>
        <begin position="355"/>
        <end position="364"/>
    </location>
</feature>
<feature type="compositionally biased region" description="Basic residues" evidence="2">
    <location>
        <begin position="368"/>
        <end position="380"/>
    </location>
</feature>
<feature type="binding site" evidence="1">
    <location>
        <position position="34"/>
    </location>
    <ligand>
        <name>Mg(2+)</name>
        <dbReference type="ChEBI" id="CHEBI:18420"/>
        <label>1</label>
    </ligand>
</feature>
<feature type="binding site" evidence="1">
    <location>
        <position position="71"/>
    </location>
    <ligand>
        <name>DNA</name>
        <dbReference type="ChEBI" id="CHEBI:16991"/>
    </ligand>
</feature>
<feature type="binding site" evidence="1">
    <location>
        <position position="87"/>
    </location>
    <ligand>
        <name>Mg(2+)</name>
        <dbReference type="ChEBI" id="CHEBI:18420"/>
        <label>1</label>
    </ligand>
</feature>
<feature type="binding site" evidence="1">
    <location>
        <position position="159"/>
    </location>
    <ligand>
        <name>DNA</name>
        <dbReference type="ChEBI" id="CHEBI:16991"/>
    </ligand>
</feature>
<feature type="binding site" evidence="1">
    <location>
        <position position="159"/>
    </location>
    <ligand>
        <name>Mg(2+)</name>
        <dbReference type="ChEBI" id="CHEBI:18420"/>
        <label>1</label>
    </ligand>
</feature>
<feature type="binding site" evidence="1">
    <location>
        <position position="161"/>
    </location>
    <ligand>
        <name>Mg(2+)</name>
        <dbReference type="ChEBI" id="CHEBI:18420"/>
        <label>1</label>
    </ligand>
</feature>
<feature type="binding site" evidence="1">
    <location>
        <position position="180"/>
    </location>
    <ligand>
        <name>Mg(2+)</name>
        <dbReference type="ChEBI" id="CHEBI:18420"/>
        <label>2</label>
    </ligand>
</feature>
<feature type="binding site" evidence="1">
    <location>
        <position position="182"/>
    </location>
    <ligand>
        <name>Mg(2+)</name>
        <dbReference type="ChEBI" id="CHEBI:18420"/>
        <label>2</label>
    </ligand>
</feature>
<feature type="binding site" evidence="1">
    <location>
        <position position="232"/>
    </location>
    <ligand>
        <name>DNA</name>
        <dbReference type="ChEBI" id="CHEBI:16991"/>
    </ligand>
</feature>
<feature type="binding site" evidence="1">
    <location>
        <position position="234"/>
    </location>
    <ligand>
        <name>DNA</name>
        <dbReference type="ChEBI" id="CHEBI:16991"/>
    </ligand>
</feature>
<feature type="binding site" evidence="1">
    <location>
        <position position="234"/>
    </location>
    <ligand>
        <name>Mg(2+)</name>
        <dbReference type="ChEBI" id="CHEBI:18420"/>
        <label>2</label>
    </ligand>
</feature>
<sequence length="380" mass="42792">MGIKGLTKLLADNAPKAMKEQKFESYFGRRIAVDASMSIYQFLIVVGRTGMETLTNEAGEVTSHLQGMFNRTIRLLEAGIKPVYVFDGKPPDLKKQELAKRYSKREDATKELTEAVEEGDKDAIEKFSKRTVKVTKQHNEECKRLLRLMGVPVVEAPCEAEAECAALCINDMVYAVASEDMDSLTFGAPRFLRHLMDPSSKKIPVMEFEVAKVLEELELTMDQFIDLCILSGCDYCDSIKGIGGQTALKLIRQHGSIESILENINKDRYQIPEDWPYQEARRLFKEPNVTLDIPELKWNAPDEEGLVEFLVKENGFNQDRVTKAIEKIKFAKNKSSQGRLESFFKPVVSTSVPLKRKDTSEKPTKAVANKKTKGAGGKKK</sequence>
<accession>Q9SXQ6</accession>
<accession>A0A0P0WQE5</accession>
<accession>Q0DGD0</accession>
<accession>Q53WJ9</accession>
<dbReference type="EC" id="3.1.-.-" evidence="1"/>
<dbReference type="EMBL" id="AB021666">
    <property type="protein sequence ID" value="BAA36171.1"/>
    <property type="molecule type" value="mRNA"/>
</dbReference>
<dbReference type="EMBL" id="AC119291">
    <property type="protein sequence ID" value="AAV59413.1"/>
    <property type="status" value="ALT_SEQ"/>
    <property type="molecule type" value="Genomic_DNA"/>
</dbReference>
<dbReference type="EMBL" id="AP008211">
    <property type="protein sequence ID" value="BAF18093.1"/>
    <property type="molecule type" value="Genomic_DNA"/>
</dbReference>
<dbReference type="EMBL" id="AP014961">
    <property type="protein sequence ID" value="BAS95109.1"/>
    <property type="molecule type" value="Genomic_DNA"/>
</dbReference>
<dbReference type="EMBL" id="CM000142">
    <property type="protein sequence ID" value="EEE64530.1"/>
    <property type="molecule type" value="Genomic_DNA"/>
</dbReference>
<dbReference type="RefSeq" id="NP_001389548.1">
    <property type="nucleotide sequence ID" value="NM_001402619.1"/>
</dbReference>
<dbReference type="RefSeq" id="XP_015639321.1">
    <property type="nucleotide sequence ID" value="XM_015783835.1"/>
</dbReference>
<dbReference type="SMR" id="Q9SXQ6"/>
<dbReference type="FunCoup" id="Q9SXQ6">
    <property type="interactions" value="2686"/>
</dbReference>
<dbReference type="STRING" id="39947.Q9SXQ6"/>
<dbReference type="PaxDb" id="39947-Q9SXQ6"/>
<dbReference type="EnsemblPlants" id="Os05t0540100-01">
    <property type="protein sequence ID" value="Os05t0540100-01"/>
    <property type="gene ID" value="Os05g0540100"/>
</dbReference>
<dbReference type="GeneID" id="4339464"/>
<dbReference type="Gramene" id="Os05t0540100-01">
    <property type="protein sequence ID" value="Os05t0540100-01"/>
    <property type="gene ID" value="Os05g0540100"/>
</dbReference>
<dbReference type="KEGG" id="dosa:Os05g0540100"/>
<dbReference type="eggNOG" id="KOG2519">
    <property type="taxonomic scope" value="Eukaryota"/>
</dbReference>
<dbReference type="HOGENOM" id="CLU_032444_2_0_1"/>
<dbReference type="InParanoid" id="Q9SXQ6"/>
<dbReference type="OMA" id="MGIPWVQ"/>
<dbReference type="OrthoDB" id="1937206at2759"/>
<dbReference type="PlantReactome" id="R-OSA-9675782">
    <property type="pathway name" value="Maturation"/>
</dbReference>
<dbReference type="Proteomes" id="UP000000763">
    <property type="component" value="Chromosome 5"/>
</dbReference>
<dbReference type="Proteomes" id="UP000007752">
    <property type="component" value="Chromosome 5"/>
</dbReference>
<dbReference type="Proteomes" id="UP000059680">
    <property type="component" value="Chromosome 5"/>
</dbReference>
<dbReference type="ExpressionAtlas" id="Q9SXQ6">
    <property type="expression patterns" value="baseline and differential"/>
</dbReference>
<dbReference type="GO" id="GO:0005739">
    <property type="term" value="C:mitochondrion"/>
    <property type="evidence" value="ECO:0007669"/>
    <property type="project" value="UniProtKB-SubCell"/>
</dbReference>
<dbReference type="GO" id="GO:0005730">
    <property type="term" value="C:nucleolus"/>
    <property type="evidence" value="ECO:0000314"/>
    <property type="project" value="UniProtKB"/>
</dbReference>
<dbReference type="GO" id="GO:0005654">
    <property type="term" value="C:nucleoplasm"/>
    <property type="evidence" value="ECO:0007669"/>
    <property type="project" value="UniProtKB-SubCell"/>
</dbReference>
<dbReference type="GO" id="GO:0008409">
    <property type="term" value="F:5'-3' exonuclease activity"/>
    <property type="evidence" value="ECO:0000318"/>
    <property type="project" value="GO_Central"/>
</dbReference>
<dbReference type="GO" id="GO:0017108">
    <property type="term" value="F:5'-flap endonuclease activity"/>
    <property type="evidence" value="ECO:0000318"/>
    <property type="project" value="GO_Central"/>
</dbReference>
<dbReference type="GO" id="GO:0003677">
    <property type="term" value="F:DNA binding"/>
    <property type="evidence" value="ECO:0007669"/>
    <property type="project" value="UniProtKB-UniRule"/>
</dbReference>
<dbReference type="GO" id="GO:0000287">
    <property type="term" value="F:magnesium ion binding"/>
    <property type="evidence" value="ECO:0007669"/>
    <property type="project" value="UniProtKB-UniRule"/>
</dbReference>
<dbReference type="GO" id="GO:0006284">
    <property type="term" value="P:base-excision repair"/>
    <property type="evidence" value="ECO:0007669"/>
    <property type="project" value="UniProtKB-UniRule"/>
</dbReference>
<dbReference type="GO" id="GO:0043137">
    <property type="term" value="P:DNA replication, removal of RNA primer"/>
    <property type="evidence" value="ECO:0007669"/>
    <property type="project" value="UniProtKB-UniRule"/>
</dbReference>
<dbReference type="CDD" id="cd09907">
    <property type="entry name" value="H3TH_FEN1-Euk"/>
    <property type="match status" value="1"/>
</dbReference>
<dbReference type="CDD" id="cd09867">
    <property type="entry name" value="PIN_FEN1"/>
    <property type="match status" value="1"/>
</dbReference>
<dbReference type="FunFam" id="1.10.150.20:FF:000009">
    <property type="entry name" value="Flap endonuclease 1"/>
    <property type="match status" value="1"/>
</dbReference>
<dbReference type="FunFam" id="3.40.50.1010:FF:000015">
    <property type="entry name" value="Flap endonuclease 1"/>
    <property type="match status" value="1"/>
</dbReference>
<dbReference type="Gene3D" id="1.10.150.20">
    <property type="entry name" value="5' to 3' exonuclease, C-terminal subdomain"/>
    <property type="match status" value="1"/>
</dbReference>
<dbReference type="Gene3D" id="3.40.50.1010">
    <property type="entry name" value="5'-nuclease"/>
    <property type="match status" value="1"/>
</dbReference>
<dbReference type="HAMAP" id="MF_00614">
    <property type="entry name" value="Fen"/>
    <property type="match status" value="1"/>
</dbReference>
<dbReference type="InterPro" id="IPR002421">
    <property type="entry name" value="5-3_exonuclease"/>
</dbReference>
<dbReference type="InterPro" id="IPR036279">
    <property type="entry name" value="5-3_exonuclease_C_sf"/>
</dbReference>
<dbReference type="InterPro" id="IPR023426">
    <property type="entry name" value="Flap_endonuc"/>
</dbReference>
<dbReference type="InterPro" id="IPR008918">
    <property type="entry name" value="HhH2"/>
</dbReference>
<dbReference type="InterPro" id="IPR029060">
    <property type="entry name" value="PIN-like_dom_sf"/>
</dbReference>
<dbReference type="InterPro" id="IPR006086">
    <property type="entry name" value="XPG-I_dom"/>
</dbReference>
<dbReference type="InterPro" id="IPR006084">
    <property type="entry name" value="XPG/Rad2"/>
</dbReference>
<dbReference type="InterPro" id="IPR019974">
    <property type="entry name" value="XPG_CS"/>
</dbReference>
<dbReference type="InterPro" id="IPR006085">
    <property type="entry name" value="XPG_DNA_repair_N"/>
</dbReference>
<dbReference type="PANTHER" id="PTHR11081:SF9">
    <property type="entry name" value="FLAP ENDONUCLEASE 1"/>
    <property type="match status" value="1"/>
</dbReference>
<dbReference type="PANTHER" id="PTHR11081">
    <property type="entry name" value="FLAP ENDONUCLEASE FAMILY MEMBER"/>
    <property type="match status" value="1"/>
</dbReference>
<dbReference type="Pfam" id="PF00867">
    <property type="entry name" value="XPG_I"/>
    <property type="match status" value="1"/>
</dbReference>
<dbReference type="Pfam" id="PF00752">
    <property type="entry name" value="XPG_N"/>
    <property type="match status" value="1"/>
</dbReference>
<dbReference type="PRINTS" id="PR00853">
    <property type="entry name" value="XPGRADSUPER"/>
</dbReference>
<dbReference type="SMART" id="SM00475">
    <property type="entry name" value="53EXOc"/>
    <property type="match status" value="1"/>
</dbReference>
<dbReference type="SMART" id="SM00279">
    <property type="entry name" value="HhH2"/>
    <property type="match status" value="1"/>
</dbReference>
<dbReference type="SMART" id="SM00484">
    <property type="entry name" value="XPGI"/>
    <property type="match status" value="1"/>
</dbReference>
<dbReference type="SMART" id="SM00485">
    <property type="entry name" value="XPGN"/>
    <property type="match status" value="1"/>
</dbReference>
<dbReference type="SUPFAM" id="SSF47807">
    <property type="entry name" value="5' to 3' exonuclease, C-terminal subdomain"/>
    <property type="match status" value="1"/>
</dbReference>
<dbReference type="SUPFAM" id="SSF88723">
    <property type="entry name" value="PIN domain-like"/>
    <property type="match status" value="1"/>
</dbReference>
<dbReference type="PROSITE" id="PS00841">
    <property type="entry name" value="XPG_1"/>
    <property type="match status" value="1"/>
</dbReference>
<dbReference type="PROSITE" id="PS00842">
    <property type="entry name" value="XPG_2"/>
    <property type="match status" value="1"/>
</dbReference>